<gene>
    <name type="primary">folB</name>
    <name type="ordered locus">SACOL0559</name>
</gene>
<protein>
    <recommendedName>
        <fullName>Dihydroneopterin aldolase</fullName>
        <shortName>DHNA</shortName>
        <ecNumber evidence="2">4.1.2.25</ecNumber>
    </recommendedName>
    <alternativeName>
        <fullName>7,8-dihydroneopterin 2'-epimerase</fullName>
    </alternativeName>
    <alternativeName>
        <fullName>7,8-dihydroneopterin aldolase</fullName>
    </alternativeName>
    <alternativeName>
        <fullName>7,8-dihydroneopterin epimerase</fullName>
        <ecNumber evidence="2">5.1.99.8</ecNumber>
    </alternativeName>
    <alternativeName>
        <fullName>Dihydroneopterin epimerase</fullName>
    </alternativeName>
</protein>
<dbReference type="EC" id="4.1.2.25" evidence="2"/>
<dbReference type="EC" id="5.1.99.8" evidence="2"/>
<dbReference type="EMBL" id="CP000046">
    <property type="protein sequence ID" value="AAW37671.1"/>
    <property type="molecule type" value="Genomic_DNA"/>
</dbReference>
<dbReference type="RefSeq" id="WP_001154302.1">
    <property type="nucleotide sequence ID" value="NZ_JBGOFO010000012.1"/>
</dbReference>
<dbReference type="BMRB" id="Q5HIG0"/>
<dbReference type="SMR" id="Q5HIG0"/>
<dbReference type="KEGG" id="sac:SACOL0559"/>
<dbReference type="HOGENOM" id="CLU_112632_1_3_9"/>
<dbReference type="UniPathway" id="UPA00077">
    <property type="reaction ID" value="UER00154"/>
</dbReference>
<dbReference type="Proteomes" id="UP000000530">
    <property type="component" value="Chromosome"/>
</dbReference>
<dbReference type="GO" id="GO:0005737">
    <property type="term" value="C:cytoplasm"/>
    <property type="evidence" value="ECO:0007669"/>
    <property type="project" value="TreeGrafter"/>
</dbReference>
<dbReference type="GO" id="GO:0004150">
    <property type="term" value="F:dihydroneopterin aldolase activity"/>
    <property type="evidence" value="ECO:0007669"/>
    <property type="project" value="UniProtKB-EC"/>
</dbReference>
<dbReference type="GO" id="GO:0016853">
    <property type="term" value="F:isomerase activity"/>
    <property type="evidence" value="ECO:0007669"/>
    <property type="project" value="UniProtKB-KW"/>
</dbReference>
<dbReference type="GO" id="GO:0046656">
    <property type="term" value="P:folic acid biosynthetic process"/>
    <property type="evidence" value="ECO:0007669"/>
    <property type="project" value="UniProtKB-KW"/>
</dbReference>
<dbReference type="GO" id="GO:0046654">
    <property type="term" value="P:tetrahydrofolate biosynthetic process"/>
    <property type="evidence" value="ECO:0007669"/>
    <property type="project" value="UniProtKB-UniPathway"/>
</dbReference>
<dbReference type="CDD" id="cd00534">
    <property type="entry name" value="DHNA_DHNTPE"/>
    <property type="match status" value="1"/>
</dbReference>
<dbReference type="FunFam" id="3.30.1130.10:FF:000003">
    <property type="entry name" value="7,8-dihydroneopterin aldolase"/>
    <property type="match status" value="1"/>
</dbReference>
<dbReference type="Gene3D" id="3.30.1130.10">
    <property type="match status" value="1"/>
</dbReference>
<dbReference type="InterPro" id="IPR006156">
    <property type="entry name" value="Dihydroneopterin_aldolase"/>
</dbReference>
<dbReference type="InterPro" id="IPR006157">
    <property type="entry name" value="FolB_dom"/>
</dbReference>
<dbReference type="InterPro" id="IPR043133">
    <property type="entry name" value="GTP-CH-I_C/QueF"/>
</dbReference>
<dbReference type="NCBIfam" id="TIGR00525">
    <property type="entry name" value="folB"/>
    <property type="match status" value="1"/>
</dbReference>
<dbReference type="NCBIfam" id="TIGR00526">
    <property type="entry name" value="folB_dom"/>
    <property type="match status" value="1"/>
</dbReference>
<dbReference type="PANTHER" id="PTHR42844">
    <property type="entry name" value="DIHYDRONEOPTERIN ALDOLASE 1-RELATED"/>
    <property type="match status" value="1"/>
</dbReference>
<dbReference type="PANTHER" id="PTHR42844:SF1">
    <property type="entry name" value="DIHYDRONEOPTERIN ALDOLASE 1-RELATED"/>
    <property type="match status" value="1"/>
</dbReference>
<dbReference type="Pfam" id="PF02152">
    <property type="entry name" value="FolB"/>
    <property type="match status" value="1"/>
</dbReference>
<dbReference type="SMART" id="SM00905">
    <property type="entry name" value="FolB"/>
    <property type="match status" value="1"/>
</dbReference>
<dbReference type="SUPFAM" id="SSF55620">
    <property type="entry name" value="Tetrahydrobiopterin biosynthesis enzymes-like"/>
    <property type="match status" value="1"/>
</dbReference>
<name>FOLB_STAAC</name>
<proteinExistence type="inferred from homology"/>
<organism>
    <name type="scientific">Staphylococcus aureus (strain COL)</name>
    <dbReference type="NCBI Taxonomy" id="93062"/>
    <lineage>
        <taxon>Bacteria</taxon>
        <taxon>Bacillati</taxon>
        <taxon>Bacillota</taxon>
        <taxon>Bacilli</taxon>
        <taxon>Bacillales</taxon>
        <taxon>Staphylococcaceae</taxon>
        <taxon>Staphylococcus</taxon>
    </lineage>
</organism>
<sequence length="121" mass="13735">MQDTIFLKGMRFYGYHGALSAENEIGQIFKVDVTLKVDLAEAGRTDNVIDTVHYGEVFEEVKSIMEGKAVNLLEHLAERIANRINSQYNRVMETKVRITKENPPIPGHYDGVGIEIVRENK</sequence>
<evidence type="ECO:0000250" key="1"/>
<evidence type="ECO:0000250" key="2">
    <source>
        <dbReference type="UniProtKB" id="P0AC16"/>
    </source>
</evidence>
<evidence type="ECO:0000250" key="3">
    <source>
        <dbReference type="UniProtKB" id="P56740"/>
    </source>
</evidence>
<evidence type="ECO:0000305" key="4"/>
<keyword id="KW-0289">Folate biosynthesis</keyword>
<keyword id="KW-0413">Isomerase</keyword>
<keyword id="KW-0456">Lyase</keyword>
<reference key="1">
    <citation type="journal article" date="2005" name="J. Bacteriol.">
        <title>Insights on evolution of virulence and resistance from the complete genome analysis of an early methicillin-resistant Staphylococcus aureus strain and a biofilm-producing methicillin-resistant Staphylococcus epidermidis strain.</title>
        <authorList>
            <person name="Gill S.R."/>
            <person name="Fouts D.E."/>
            <person name="Archer G.L."/>
            <person name="Mongodin E.F."/>
            <person name="DeBoy R.T."/>
            <person name="Ravel J."/>
            <person name="Paulsen I.T."/>
            <person name="Kolonay J.F."/>
            <person name="Brinkac L.M."/>
            <person name="Beanan M.J."/>
            <person name="Dodson R.J."/>
            <person name="Daugherty S.C."/>
            <person name="Madupu R."/>
            <person name="Angiuoli S.V."/>
            <person name="Durkin A.S."/>
            <person name="Haft D.H."/>
            <person name="Vamathevan J.J."/>
            <person name="Khouri H."/>
            <person name="Utterback T.R."/>
            <person name="Lee C."/>
            <person name="Dimitrov G."/>
            <person name="Jiang L."/>
            <person name="Qin H."/>
            <person name="Weidman J."/>
            <person name="Tran K."/>
            <person name="Kang K.H."/>
            <person name="Hance I.R."/>
            <person name="Nelson K.E."/>
            <person name="Fraser C.M."/>
        </authorList>
    </citation>
    <scope>NUCLEOTIDE SEQUENCE [LARGE SCALE GENOMIC DNA]</scope>
    <source>
        <strain>COL</strain>
    </source>
</reference>
<comment type="function">
    <text evidence="3">Catalyzes the conversion of 7,8-dihydroneopterin to 6-hydroxymethyl-7,8-dihydropterin. Can also catalyze the epimerization of carbon 2' of dihydroneopterin to dihydromonapterin.</text>
</comment>
<comment type="catalytic activity">
    <reaction evidence="3">
        <text>7,8-dihydroneopterin = 6-hydroxymethyl-7,8-dihydropterin + glycolaldehyde</text>
        <dbReference type="Rhea" id="RHEA:10540"/>
        <dbReference type="ChEBI" id="CHEBI:17001"/>
        <dbReference type="ChEBI" id="CHEBI:17071"/>
        <dbReference type="ChEBI" id="CHEBI:44841"/>
        <dbReference type="EC" id="4.1.2.25"/>
    </reaction>
</comment>
<comment type="catalytic activity">
    <reaction evidence="2">
        <text>7,8-dihydroneopterin = 7,8-dihydromonapterin</text>
        <dbReference type="Rhea" id="RHEA:45328"/>
        <dbReference type="ChEBI" id="CHEBI:17001"/>
        <dbReference type="ChEBI" id="CHEBI:71175"/>
        <dbReference type="EC" id="5.1.99.8"/>
    </reaction>
</comment>
<comment type="pathway">
    <text>Cofactor biosynthesis; tetrahydrofolate biosynthesis; 2-amino-4-hydroxy-6-hydroxymethyl-7,8-dihydropteridine diphosphate from 7,8-dihydroneopterin triphosphate: step 3/4.</text>
</comment>
<comment type="subunit">
    <text evidence="1">Homooctamer. Four molecules assemble into a ring, and two rings come together to give a cylinder with a hole of at least 13 a diameter (By similarity).</text>
</comment>
<comment type="similarity">
    <text evidence="4">Belongs to the DHNA family.</text>
</comment>
<feature type="chain" id="PRO_0000168277" description="Dihydroneopterin aldolase">
    <location>
        <begin position="1"/>
        <end position="121"/>
    </location>
</feature>
<feature type="active site" description="Proton donor/acceptor" evidence="3">
    <location>
        <position position="100"/>
    </location>
</feature>
<feature type="binding site" evidence="3">
    <location>
        <position position="22"/>
    </location>
    <ligand>
        <name>substrate</name>
    </ligand>
</feature>
<feature type="binding site" evidence="3">
    <location>
        <position position="54"/>
    </location>
    <ligand>
        <name>substrate</name>
    </ligand>
</feature>
<feature type="binding site" evidence="3">
    <location>
        <begin position="73"/>
        <end position="74"/>
    </location>
    <ligand>
        <name>substrate</name>
    </ligand>
</feature>
<accession>Q5HIG0</accession>